<proteinExistence type="inferred from homology"/>
<accession>Q92I57</accession>
<comment type="subcellular location">
    <subcellularLocation>
        <location evidence="2">Cell membrane</location>
        <topology evidence="2">Lipid-anchor</topology>
    </subcellularLocation>
</comment>
<organism>
    <name type="scientific">Rickettsia conorii (strain ATCC VR-613 / Malish 7)</name>
    <dbReference type="NCBI Taxonomy" id="272944"/>
    <lineage>
        <taxon>Bacteria</taxon>
        <taxon>Pseudomonadati</taxon>
        <taxon>Pseudomonadota</taxon>
        <taxon>Alphaproteobacteria</taxon>
        <taxon>Rickettsiales</taxon>
        <taxon>Rickettsiaceae</taxon>
        <taxon>Rickettsieae</taxon>
        <taxon>Rickettsia</taxon>
        <taxon>spotted fever group</taxon>
    </lineage>
</organism>
<dbReference type="EMBL" id="AE006914">
    <property type="protein sequence ID" value="AAL03101.1"/>
    <property type="molecule type" value="Genomic_DNA"/>
</dbReference>
<dbReference type="PIR" id="C97770">
    <property type="entry name" value="C97770"/>
</dbReference>
<dbReference type="RefSeq" id="WP_010977198.1">
    <property type="nucleotide sequence ID" value="NC_003103.1"/>
</dbReference>
<dbReference type="SMR" id="Q92I57"/>
<dbReference type="GeneID" id="927671"/>
<dbReference type="KEGG" id="rco:RC0563"/>
<dbReference type="PATRIC" id="fig|272944.4.peg.643"/>
<dbReference type="HOGENOM" id="CLU_1276797_0_0_5"/>
<dbReference type="Proteomes" id="UP000000816">
    <property type="component" value="Chromosome"/>
</dbReference>
<dbReference type="GO" id="GO:0005886">
    <property type="term" value="C:plasma membrane"/>
    <property type="evidence" value="ECO:0007669"/>
    <property type="project" value="UniProtKB-SubCell"/>
</dbReference>
<dbReference type="PROSITE" id="PS51257">
    <property type="entry name" value="PROKAR_LIPOPROTEIN"/>
    <property type="match status" value="1"/>
</dbReference>
<keyword id="KW-1003">Cell membrane</keyword>
<keyword id="KW-0175">Coiled coil</keyword>
<keyword id="KW-0449">Lipoprotein</keyword>
<keyword id="KW-0472">Membrane</keyword>
<keyword id="KW-0564">Palmitate</keyword>
<keyword id="KW-0732">Signal</keyword>
<sequence>MLKKIIILFLGMFLLSACTDNFRSYFQRSANNRLVDSKGAKGGKRKPVYNNKYITLAKKNIVEDNLDDDNDDDYDSDSPLRGERIDPVKRNREMYLKMIKRDIARQKAEAGFAESDDDMTLSRANKKVRKDDSDKEKKIQEELNQIKAMLRETKRDISKYTCPNAVVNQNYAPPVTNYEPVNYPPVKNSKPYNNNSKVKQKFILEDDDNGSNACSI</sequence>
<feature type="signal peptide" evidence="2">
    <location>
        <begin position="1"/>
        <end position="17"/>
    </location>
</feature>
<feature type="chain" id="PRO_0000280786" description="Uncharacterized lipoprotein RC0563">
    <location>
        <begin position="18"/>
        <end position="216"/>
    </location>
</feature>
<feature type="coiled-coil region" evidence="1">
    <location>
        <begin position="133"/>
        <end position="162"/>
    </location>
</feature>
<feature type="lipid moiety-binding region" description="N-palmitoyl cysteine" evidence="2">
    <location>
        <position position="18"/>
    </location>
</feature>
<feature type="lipid moiety-binding region" description="S-diacylglycerol cysteine" evidence="2">
    <location>
        <position position="18"/>
    </location>
</feature>
<name>Y563_RICCN</name>
<protein>
    <recommendedName>
        <fullName>Uncharacterized lipoprotein RC0563</fullName>
    </recommendedName>
</protein>
<reference key="1">
    <citation type="journal article" date="2001" name="Science">
        <title>Mechanisms of evolution in Rickettsia conorii and R. prowazekii.</title>
        <authorList>
            <person name="Ogata H."/>
            <person name="Audic S."/>
            <person name="Renesto-Audiffren P."/>
            <person name="Fournier P.-E."/>
            <person name="Barbe V."/>
            <person name="Samson D."/>
            <person name="Roux V."/>
            <person name="Cossart P."/>
            <person name="Weissenbach J."/>
            <person name="Claverie J.-M."/>
            <person name="Raoult D."/>
        </authorList>
    </citation>
    <scope>NUCLEOTIDE SEQUENCE [LARGE SCALE GENOMIC DNA]</scope>
    <source>
        <strain>ATCC VR-613 / Malish 7</strain>
    </source>
</reference>
<gene>
    <name type="ordered locus">RC0563</name>
</gene>
<evidence type="ECO:0000255" key="1"/>
<evidence type="ECO:0000255" key="2">
    <source>
        <dbReference type="PROSITE-ProRule" id="PRU00303"/>
    </source>
</evidence>